<keyword id="KW-0963">Cytoplasm</keyword>
<keyword id="KW-0342">GTP-binding</keyword>
<keyword id="KW-0396">Initiation factor</keyword>
<keyword id="KW-0547">Nucleotide-binding</keyword>
<keyword id="KW-0648">Protein biosynthesis</keyword>
<keyword id="KW-1185">Reference proteome</keyword>
<name>IF2_CHLL3</name>
<feature type="chain" id="PRO_0000228224" description="Translation initiation factor IF-2">
    <location>
        <begin position="1"/>
        <end position="915"/>
    </location>
</feature>
<feature type="domain" description="tr-type G">
    <location>
        <begin position="412"/>
        <end position="582"/>
    </location>
</feature>
<feature type="region of interest" description="Disordered" evidence="3">
    <location>
        <begin position="83"/>
        <end position="177"/>
    </location>
</feature>
<feature type="region of interest" description="Disordered" evidence="3">
    <location>
        <begin position="216"/>
        <end position="280"/>
    </location>
</feature>
<feature type="region of interest" description="Disordered" evidence="3">
    <location>
        <begin position="293"/>
        <end position="328"/>
    </location>
</feature>
<feature type="region of interest" description="G1" evidence="1">
    <location>
        <begin position="421"/>
        <end position="428"/>
    </location>
</feature>
<feature type="region of interest" description="G2" evidence="1">
    <location>
        <begin position="446"/>
        <end position="450"/>
    </location>
</feature>
<feature type="region of interest" description="G3" evidence="1">
    <location>
        <begin position="468"/>
        <end position="471"/>
    </location>
</feature>
<feature type="region of interest" description="G4" evidence="1">
    <location>
        <begin position="522"/>
        <end position="525"/>
    </location>
</feature>
<feature type="region of interest" description="G5" evidence="1">
    <location>
        <begin position="558"/>
        <end position="560"/>
    </location>
</feature>
<feature type="compositionally biased region" description="Basic and acidic residues" evidence="3">
    <location>
        <begin position="83"/>
        <end position="94"/>
    </location>
</feature>
<feature type="compositionally biased region" description="Low complexity" evidence="3">
    <location>
        <begin position="111"/>
        <end position="129"/>
    </location>
</feature>
<feature type="compositionally biased region" description="Low complexity" evidence="3">
    <location>
        <begin position="137"/>
        <end position="164"/>
    </location>
</feature>
<feature type="compositionally biased region" description="Pro residues" evidence="3">
    <location>
        <begin position="165"/>
        <end position="177"/>
    </location>
</feature>
<feature type="compositionally biased region" description="Polar residues" evidence="3">
    <location>
        <begin position="293"/>
        <end position="305"/>
    </location>
</feature>
<feature type="compositionally biased region" description="Basic and acidic residues" evidence="3">
    <location>
        <begin position="314"/>
        <end position="328"/>
    </location>
</feature>
<feature type="binding site" evidence="2">
    <location>
        <begin position="421"/>
        <end position="428"/>
    </location>
    <ligand>
        <name>GTP</name>
        <dbReference type="ChEBI" id="CHEBI:37565"/>
    </ligand>
</feature>
<feature type="binding site" evidence="2">
    <location>
        <begin position="468"/>
        <end position="472"/>
    </location>
    <ligand>
        <name>GTP</name>
        <dbReference type="ChEBI" id="CHEBI:37565"/>
    </ligand>
</feature>
<feature type="binding site" evidence="2">
    <location>
        <begin position="522"/>
        <end position="525"/>
    </location>
    <ligand>
        <name>GTP</name>
        <dbReference type="ChEBI" id="CHEBI:37565"/>
    </ligand>
</feature>
<accession>Q3B1Z8</accession>
<proteinExistence type="inferred from homology"/>
<comment type="function">
    <text evidence="2">One of the essential components for the initiation of protein synthesis. Protects formylmethionyl-tRNA from spontaneous hydrolysis and promotes its binding to the 30S ribosomal subunits. Also involved in the hydrolysis of GTP during the formation of the 70S ribosomal complex.</text>
</comment>
<comment type="subcellular location">
    <subcellularLocation>
        <location evidence="2">Cytoplasm</location>
    </subcellularLocation>
</comment>
<comment type="similarity">
    <text evidence="2">Belongs to the TRAFAC class translation factor GTPase superfamily. Classic translation factor GTPase family. IF-2 subfamily.</text>
</comment>
<protein>
    <recommendedName>
        <fullName evidence="2">Translation initiation factor IF-2</fullName>
    </recommendedName>
</protein>
<evidence type="ECO:0000250" key="1"/>
<evidence type="ECO:0000255" key="2">
    <source>
        <dbReference type="HAMAP-Rule" id="MF_00100"/>
    </source>
</evidence>
<evidence type="ECO:0000256" key="3">
    <source>
        <dbReference type="SAM" id="MobiDB-lite"/>
    </source>
</evidence>
<sequence length="915" mass="99922">MAVEDMDKKYRISDIARELQVSPQEVLRFVKEGGAKVASTSSMVDSEMRGLIFAEFSNEKKMVDETRKIRAEKQLRLTRLEEQSRRAVEKEQILRETLTPSPAPPVHEPPVRAAAQPAPVPVAAGEAPSPLAPETPAPATESAPAVAPAGVPAAEPVSEALSAPLPEPVPEPVPEPPAPEVVAVVEAVPNDQIVSYDAPKNIGGLTVLGTLDMQSEADRKKKGKKKNFREQAVALKDEFETPSSTTLDEDGVPKKKPVAGVQPEGFGVGKKKGKKKKPAVDDKVISANIRTTISGMDDSSGTGSRSKFRKQRKMEREREQEEADLLRESEQQIMRVTEYASPHELAELMGVTAKDIIQKCFALGKFVTINQRLDKESIELIALEFGFEAEFISEVEATAVEAVVDRDEDLETRPPVVTIMGHVDHGKTSLLDYIRNSNVVAGESGGITQHVAAYEVTASNGRKITFLDTPGHEAFTAMRARGAQVTDIVILVVAADDSVMPQTIEAINHAKAAGVPIVVAINKMDKPEANPEKIKTQLSEAGVLVEEWGGESQCQEISAKKGLGIEELMEKVLTEAEMRELKGNFSKDVPATGVIVESELDKGKGVISAVLVQRGYLKVGDPFVAGNIMGKVRALMDERGKRIPSAGPSQPVSVLGFEDLPQAGDVLTVMASDKEARDLAQKRQIIRREHEFRRSTRVKLDSIARQIKEGLMKELSVIIKADTDGSIQALADGLMKIQNEEVKVQIIHQGVGQITETDVLLAAASDAIIIGFRVRPNVNAKKLAEKEDLDVRFYSVIYHVLEDVEKALEGMLSPELHEESLGSLEIRQVFRVPKVGNVGGCHVLEGKILRDAKVRLLRDGVQIYDGMLDTLRRFKDDVKEVDAGYECGVGLKNYDDIKVGDVVEAYRIVEKKRKL</sequence>
<organism>
    <name type="scientific">Chlorobium luteolum (strain DSM 273 / BCRC 81028 / 2530)</name>
    <name type="common">Pelodictyon luteolum</name>
    <dbReference type="NCBI Taxonomy" id="319225"/>
    <lineage>
        <taxon>Bacteria</taxon>
        <taxon>Pseudomonadati</taxon>
        <taxon>Chlorobiota</taxon>
        <taxon>Chlorobiia</taxon>
        <taxon>Chlorobiales</taxon>
        <taxon>Chlorobiaceae</taxon>
        <taxon>Chlorobium/Pelodictyon group</taxon>
        <taxon>Pelodictyon</taxon>
    </lineage>
</organism>
<gene>
    <name evidence="2" type="primary">infB</name>
    <name type="ordered locus">Plut_1779</name>
</gene>
<dbReference type="EMBL" id="CP000096">
    <property type="protein sequence ID" value="ABB24633.1"/>
    <property type="molecule type" value="Genomic_DNA"/>
</dbReference>
<dbReference type="RefSeq" id="WP_011358505.1">
    <property type="nucleotide sequence ID" value="NC_007512.1"/>
</dbReference>
<dbReference type="SMR" id="Q3B1Z8"/>
<dbReference type="STRING" id="319225.Plut_1779"/>
<dbReference type="KEGG" id="plt:Plut_1779"/>
<dbReference type="eggNOG" id="COG0532">
    <property type="taxonomic scope" value="Bacteria"/>
</dbReference>
<dbReference type="HOGENOM" id="CLU_006301_0_1_10"/>
<dbReference type="OrthoDB" id="9811804at2"/>
<dbReference type="Proteomes" id="UP000002709">
    <property type="component" value="Chromosome"/>
</dbReference>
<dbReference type="GO" id="GO:0005737">
    <property type="term" value="C:cytoplasm"/>
    <property type="evidence" value="ECO:0007669"/>
    <property type="project" value="UniProtKB-SubCell"/>
</dbReference>
<dbReference type="GO" id="GO:0005525">
    <property type="term" value="F:GTP binding"/>
    <property type="evidence" value="ECO:0007669"/>
    <property type="project" value="UniProtKB-KW"/>
</dbReference>
<dbReference type="GO" id="GO:0003924">
    <property type="term" value="F:GTPase activity"/>
    <property type="evidence" value="ECO:0007669"/>
    <property type="project" value="UniProtKB-UniRule"/>
</dbReference>
<dbReference type="GO" id="GO:0003743">
    <property type="term" value="F:translation initiation factor activity"/>
    <property type="evidence" value="ECO:0007669"/>
    <property type="project" value="UniProtKB-UniRule"/>
</dbReference>
<dbReference type="CDD" id="cd01887">
    <property type="entry name" value="IF2_eIF5B"/>
    <property type="match status" value="1"/>
</dbReference>
<dbReference type="CDD" id="cd03702">
    <property type="entry name" value="IF2_mtIF2_II"/>
    <property type="match status" value="1"/>
</dbReference>
<dbReference type="CDD" id="cd03692">
    <property type="entry name" value="mtIF2_IVc"/>
    <property type="match status" value="1"/>
</dbReference>
<dbReference type="FunFam" id="2.40.30.10:FF:000008">
    <property type="entry name" value="Translation initiation factor IF-2"/>
    <property type="match status" value="1"/>
</dbReference>
<dbReference type="FunFam" id="2.40.30.10:FF:000054">
    <property type="entry name" value="Translation initiation factor IF-2"/>
    <property type="match status" value="1"/>
</dbReference>
<dbReference type="FunFam" id="3.40.50.10050:FF:000001">
    <property type="entry name" value="Translation initiation factor IF-2"/>
    <property type="match status" value="1"/>
</dbReference>
<dbReference type="FunFam" id="3.40.50.300:FF:000019">
    <property type="entry name" value="Translation initiation factor IF-2"/>
    <property type="match status" value="1"/>
</dbReference>
<dbReference type="Gene3D" id="1.10.10.2480">
    <property type="match status" value="1"/>
</dbReference>
<dbReference type="Gene3D" id="3.40.50.300">
    <property type="entry name" value="P-loop containing nucleotide triphosphate hydrolases"/>
    <property type="match status" value="1"/>
</dbReference>
<dbReference type="Gene3D" id="2.40.30.10">
    <property type="entry name" value="Translation factors"/>
    <property type="match status" value="2"/>
</dbReference>
<dbReference type="Gene3D" id="3.40.50.10050">
    <property type="entry name" value="Translation initiation factor IF- 2, domain 3"/>
    <property type="match status" value="1"/>
</dbReference>
<dbReference type="HAMAP" id="MF_00100_B">
    <property type="entry name" value="IF_2_B"/>
    <property type="match status" value="1"/>
</dbReference>
<dbReference type="InterPro" id="IPR053905">
    <property type="entry name" value="EF-G-like_DII"/>
</dbReference>
<dbReference type="InterPro" id="IPR044145">
    <property type="entry name" value="IF2_II"/>
</dbReference>
<dbReference type="InterPro" id="IPR006847">
    <property type="entry name" value="IF2_N"/>
</dbReference>
<dbReference type="InterPro" id="IPR027417">
    <property type="entry name" value="P-loop_NTPase"/>
</dbReference>
<dbReference type="InterPro" id="IPR005225">
    <property type="entry name" value="Small_GTP-bd"/>
</dbReference>
<dbReference type="InterPro" id="IPR000795">
    <property type="entry name" value="T_Tr_GTP-bd_dom"/>
</dbReference>
<dbReference type="InterPro" id="IPR000178">
    <property type="entry name" value="TF_IF2_bacterial-like"/>
</dbReference>
<dbReference type="InterPro" id="IPR015760">
    <property type="entry name" value="TIF_IF2"/>
</dbReference>
<dbReference type="InterPro" id="IPR023115">
    <property type="entry name" value="TIF_IF2_dom3"/>
</dbReference>
<dbReference type="InterPro" id="IPR036925">
    <property type="entry name" value="TIF_IF2_dom3_sf"/>
</dbReference>
<dbReference type="InterPro" id="IPR009000">
    <property type="entry name" value="Transl_B-barrel_sf"/>
</dbReference>
<dbReference type="NCBIfam" id="TIGR00487">
    <property type="entry name" value="IF-2"/>
    <property type="match status" value="1"/>
</dbReference>
<dbReference type="NCBIfam" id="TIGR00231">
    <property type="entry name" value="small_GTP"/>
    <property type="match status" value="1"/>
</dbReference>
<dbReference type="PANTHER" id="PTHR43381:SF5">
    <property type="entry name" value="TR-TYPE G DOMAIN-CONTAINING PROTEIN"/>
    <property type="match status" value="1"/>
</dbReference>
<dbReference type="PANTHER" id="PTHR43381">
    <property type="entry name" value="TRANSLATION INITIATION FACTOR IF-2-RELATED"/>
    <property type="match status" value="1"/>
</dbReference>
<dbReference type="Pfam" id="PF22042">
    <property type="entry name" value="EF-G_D2"/>
    <property type="match status" value="1"/>
</dbReference>
<dbReference type="Pfam" id="PF00009">
    <property type="entry name" value="GTP_EFTU"/>
    <property type="match status" value="1"/>
</dbReference>
<dbReference type="Pfam" id="PF11987">
    <property type="entry name" value="IF-2"/>
    <property type="match status" value="1"/>
</dbReference>
<dbReference type="Pfam" id="PF04760">
    <property type="entry name" value="IF2_N"/>
    <property type="match status" value="1"/>
</dbReference>
<dbReference type="SUPFAM" id="SSF52156">
    <property type="entry name" value="Initiation factor IF2/eIF5b, domain 3"/>
    <property type="match status" value="1"/>
</dbReference>
<dbReference type="SUPFAM" id="SSF52540">
    <property type="entry name" value="P-loop containing nucleoside triphosphate hydrolases"/>
    <property type="match status" value="1"/>
</dbReference>
<dbReference type="SUPFAM" id="SSF50447">
    <property type="entry name" value="Translation proteins"/>
    <property type="match status" value="2"/>
</dbReference>
<dbReference type="PROSITE" id="PS51722">
    <property type="entry name" value="G_TR_2"/>
    <property type="match status" value="1"/>
</dbReference>
<dbReference type="PROSITE" id="PS01176">
    <property type="entry name" value="IF2"/>
    <property type="match status" value="1"/>
</dbReference>
<reference key="1">
    <citation type="submission" date="2005-08" db="EMBL/GenBank/DDBJ databases">
        <title>Complete sequence of Pelodictyon luteolum DSM 273.</title>
        <authorList>
            <consortium name="US DOE Joint Genome Institute"/>
            <person name="Copeland A."/>
            <person name="Lucas S."/>
            <person name="Lapidus A."/>
            <person name="Barry K."/>
            <person name="Detter J.C."/>
            <person name="Glavina T."/>
            <person name="Hammon N."/>
            <person name="Israni S."/>
            <person name="Pitluck S."/>
            <person name="Bryant D."/>
            <person name="Schmutz J."/>
            <person name="Larimer F."/>
            <person name="Land M."/>
            <person name="Kyrpides N."/>
            <person name="Ivanova N."/>
            <person name="Richardson P."/>
        </authorList>
    </citation>
    <scope>NUCLEOTIDE SEQUENCE [LARGE SCALE GENOMIC DNA]</scope>
    <source>
        <strain>DSM 273 / BCRC 81028 / 2530</strain>
    </source>
</reference>